<proteinExistence type="inferred from homology"/>
<dbReference type="EC" id="3.1.15.-" evidence="1"/>
<dbReference type="EMBL" id="CP000514">
    <property type="protein sequence ID" value="ABM19851.1"/>
    <property type="molecule type" value="Genomic_DNA"/>
</dbReference>
<dbReference type="RefSeq" id="WP_011786221.1">
    <property type="nucleotide sequence ID" value="NC_008740.1"/>
</dbReference>
<dbReference type="SMR" id="A1U4D2"/>
<dbReference type="STRING" id="351348.Maqu_2776"/>
<dbReference type="GeneID" id="31822055"/>
<dbReference type="KEGG" id="maq:Maqu_2776"/>
<dbReference type="eggNOG" id="COG1949">
    <property type="taxonomic scope" value="Bacteria"/>
</dbReference>
<dbReference type="HOGENOM" id="CLU_064761_2_0_6"/>
<dbReference type="OrthoDB" id="9801329at2"/>
<dbReference type="Proteomes" id="UP000000998">
    <property type="component" value="Chromosome"/>
</dbReference>
<dbReference type="GO" id="GO:0005737">
    <property type="term" value="C:cytoplasm"/>
    <property type="evidence" value="ECO:0007669"/>
    <property type="project" value="UniProtKB-SubCell"/>
</dbReference>
<dbReference type="GO" id="GO:0000175">
    <property type="term" value="F:3'-5'-RNA exonuclease activity"/>
    <property type="evidence" value="ECO:0007669"/>
    <property type="project" value="InterPro"/>
</dbReference>
<dbReference type="GO" id="GO:0003676">
    <property type="term" value="F:nucleic acid binding"/>
    <property type="evidence" value="ECO:0007669"/>
    <property type="project" value="InterPro"/>
</dbReference>
<dbReference type="GO" id="GO:0006259">
    <property type="term" value="P:DNA metabolic process"/>
    <property type="evidence" value="ECO:0007669"/>
    <property type="project" value="UniProtKB-ARBA"/>
</dbReference>
<dbReference type="CDD" id="cd06135">
    <property type="entry name" value="Orn"/>
    <property type="match status" value="1"/>
</dbReference>
<dbReference type="FunFam" id="3.30.420.10:FF:000003">
    <property type="entry name" value="Oligoribonuclease"/>
    <property type="match status" value="1"/>
</dbReference>
<dbReference type="Gene3D" id="3.30.420.10">
    <property type="entry name" value="Ribonuclease H-like superfamily/Ribonuclease H"/>
    <property type="match status" value="1"/>
</dbReference>
<dbReference type="HAMAP" id="MF_00045">
    <property type="entry name" value="Oligoribonuclease"/>
    <property type="match status" value="1"/>
</dbReference>
<dbReference type="InterPro" id="IPR013520">
    <property type="entry name" value="Exonuclease_RNaseT/DNA_pol3"/>
</dbReference>
<dbReference type="InterPro" id="IPR022894">
    <property type="entry name" value="Oligoribonuclease"/>
</dbReference>
<dbReference type="InterPro" id="IPR012337">
    <property type="entry name" value="RNaseH-like_sf"/>
</dbReference>
<dbReference type="InterPro" id="IPR036397">
    <property type="entry name" value="RNaseH_sf"/>
</dbReference>
<dbReference type="NCBIfam" id="NF003765">
    <property type="entry name" value="PRK05359.1"/>
    <property type="match status" value="1"/>
</dbReference>
<dbReference type="PANTHER" id="PTHR11046">
    <property type="entry name" value="OLIGORIBONUCLEASE, MITOCHONDRIAL"/>
    <property type="match status" value="1"/>
</dbReference>
<dbReference type="PANTHER" id="PTHR11046:SF0">
    <property type="entry name" value="OLIGORIBONUCLEASE, MITOCHONDRIAL"/>
    <property type="match status" value="1"/>
</dbReference>
<dbReference type="Pfam" id="PF00929">
    <property type="entry name" value="RNase_T"/>
    <property type="match status" value="1"/>
</dbReference>
<dbReference type="SMART" id="SM00479">
    <property type="entry name" value="EXOIII"/>
    <property type="match status" value="1"/>
</dbReference>
<dbReference type="SUPFAM" id="SSF53098">
    <property type="entry name" value="Ribonuclease H-like"/>
    <property type="match status" value="1"/>
</dbReference>
<accession>A1U4D2</accession>
<feature type="chain" id="PRO_1000004259" description="Oligoribonuclease">
    <location>
        <begin position="1"/>
        <end position="180"/>
    </location>
</feature>
<feature type="domain" description="Exonuclease" evidence="1">
    <location>
        <begin position="7"/>
        <end position="170"/>
    </location>
</feature>
<feature type="active site" evidence="1">
    <location>
        <position position="128"/>
    </location>
</feature>
<name>ORN_MARN8</name>
<gene>
    <name evidence="1" type="primary">orn</name>
    <name type="ordered locus">Maqu_2776</name>
</gene>
<keyword id="KW-0963">Cytoplasm</keyword>
<keyword id="KW-0269">Exonuclease</keyword>
<keyword id="KW-0378">Hydrolase</keyword>
<keyword id="KW-0540">Nuclease</keyword>
<comment type="function">
    <text evidence="1">3'-to-5' exoribonuclease specific for small oligoribonucleotides.</text>
</comment>
<comment type="subcellular location">
    <subcellularLocation>
        <location evidence="1">Cytoplasm</location>
    </subcellularLocation>
</comment>
<comment type="similarity">
    <text evidence="1">Belongs to the oligoribonuclease family.</text>
</comment>
<organism>
    <name type="scientific">Marinobacter nauticus (strain ATCC 700491 / DSM 11845 / VT8)</name>
    <name type="common">Marinobacter aquaeolei</name>
    <dbReference type="NCBI Taxonomy" id="351348"/>
    <lineage>
        <taxon>Bacteria</taxon>
        <taxon>Pseudomonadati</taxon>
        <taxon>Pseudomonadota</taxon>
        <taxon>Gammaproteobacteria</taxon>
        <taxon>Pseudomonadales</taxon>
        <taxon>Marinobacteraceae</taxon>
        <taxon>Marinobacter</taxon>
    </lineage>
</organism>
<evidence type="ECO:0000255" key="1">
    <source>
        <dbReference type="HAMAP-Rule" id="MF_00045"/>
    </source>
</evidence>
<protein>
    <recommendedName>
        <fullName evidence="1">Oligoribonuclease</fullName>
        <ecNumber evidence="1">3.1.15.-</ecNumber>
    </recommendedName>
</protein>
<sequence length="180" mass="20698">MSNGDRLIWIDLEMTGLDPEQERIIEMASIITDSQLNIVAEGPVIAIHQPDSLLEQMDEWCTRTHGASGLTQRVKESTISEAEAEQQTLEFLGKHLEPGQSPLCGNSIGQDRRFLVKYMPKLEAFFHYRNLDVSTVKELARRWRPDVLEGVKKQGSHLALDDIRDSINELRHYRDHFFKL</sequence>
<reference key="1">
    <citation type="journal article" date="2011" name="Appl. Environ. Microbiol.">
        <title>Genomic potential of Marinobacter aquaeolei, a biogeochemical 'opportunitroph'.</title>
        <authorList>
            <person name="Singer E."/>
            <person name="Webb E.A."/>
            <person name="Nelson W.C."/>
            <person name="Heidelberg J.F."/>
            <person name="Ivanova N."/>
            <person name="Pati A."/>
            <person name="Edwards K.J."/>
        </authorList>
    </citation>
    <scope>NUCLEOTIDE SEQUENCE [LARGE SCALE GENOMIC DNA]</scope>
    <source>
        <strain>ATCC 700491 / DSM 11845 / VT8</strain>
    </source>
</reference>